<evidence type="ECO:0000255" key="1">
    <source>
        <dbReference type="HAMAP-Rule" id="MF_00233"/>
    </source>
</evidence>
<dbReference type="EMBL" id="CP000802">
    <property type="protein sequence ID" value="ABV05649.1"/>
    <property type="molecule type" value="Genomic_DNA"/>
</dbReference>
<dbReference type="RefSeq" id="WP_001130692.1">
    <property type="nucleotide sequence ID" value="NC_009800.1"/>
</dbReference>
<dbReference type="BMRB" id="A7ZZE5"/>
<dbReference type="SMR" id="A7ZZE5"/>
<dbReference type="GeneID" id="93775274"/>
<dbReference type="KEGG" id="ecx:EcHS_A1314"/>
<dbReference type="HOGENOM" id="CLU_092816_1_1_6"/>
<dbReference type="GO" id="GO:0009279">
    <property type="term" value="C:cell outer membrane"/>
    <property type="evidence" value="ECO:0007669"/>
    <property type="project" value="UniProtKB-SubCell"/>
</dbReference>
<dbReference type="GO" id="GO:0044874">
    <property type="term" value="P:lipoprotein localization to outer membrane"/>
    <property type="evidence" value="ECO:0007669"/>
    <property type="project" value="UniProtKB-UniRule"/>
</dbReference>
<dbReference type="GO" id="GO:0015031">
    <property type="term" value="P:protein transport"/>
    <property type="evidence" value="ECO:0007669"/>
    <property type="project" value="UniProtKB-KW"/>
</dbReference>
<dbReference type="CDD" id="cd16326">
    <property type="entry name" value="LolB"/>
    <property type="match status" value="1"/>
</dbReference>
<dbReference type="FunFam" id="2.50.20.10:FF:000002">
    <property type="entry name" value="Outer-membrane lipoprotein LolB"/>
    <property type="match status" value="1"/>
</dbReference>
<dbReference type="Gene3D" id="2.50.20.10">
    <property type="entry name" value="Lipoprotein localisation LolA/LolB/LppX"/>
    <property type="match status" value="1"/>
</dbReference>
<dbReference type="HAMAP" id="MF_00233">
    <property type="entry name" value="LolB"/>
    <property type="match status" value="1"/>
</dbReference>
<dbReference type="InterPro" id="IPR029046">
    <property type="entry name" value="LolA/LolB/LppX"/>
</dbReference>
<dbReference type="InterPro" id="IPR004565">
    <property type="entry name" value="OM_lipoprot_LolB"/>
</dbReference>
<dbReference type="NCBIfam" id="TIGR00548">
    <property type="entry name" value="lolB"/>
    <property type="match status" value="1"/>
</dbReference>
<dbReference type="Pfam" id="PF03550">
    <property type="entry name" value="LolB"/>
    <property type="match status" value="1"/>
</dbReference>
<dbReference type="SUPFAM" id="SSF89392">
    <property type="entry name" value="Prokaryotic lipoproteins and lipoprotein localization factors"/>
    <property type="match status" value="1"/>
</dbReference>
<dbReference type="PROSITE" id="PS51257">
    <property type="entry name" value="PROKAR_LIPOPROTEIN"/>
    <property type="match status" value="1"/>
</dbReference>
<protein>
    <recommendedName>
        <fullName evidence="1">Outer-membrane lipoprotein LolB</fullName>
    </recommendedName>
</protein>
<name>LOLB_ECOHS</name>
<organism>
    <name type="scientific">Escherichia coli O9:H4 (strain HS)</name>
    <dbReference type="NCBI Taxonomy" id="331112"/>
    <lineage>
        <taxon>Bacteria</taxon>
        <taxon>Pseudomonadati</taxon>
        <taxon>Pseudomonadota</taxon>
        <taxon>Gammaproteobacteria</taxon>
        <taxon>Enterobacterales</taxon>
        <taxon>Enterobacteriaceae</taxon>
        <taxon>Escherichia</taxon>
    </lineage>
</organism>
<sequence>MPLPDFRLIRLLPLAALVLTACSVTTPKGPGKSPDSPQWRQHQQDVRNLNQYQTRGAFAYISDQQKVYARFFWQQTGQDRYRLLLTNPLGSTELELNAQPGNVQLVDNKGQRYTADDAEEMIGKLTGMPIPLNSLRQWILGLPGDATDYKLDDQYRLSEITYSQNGKNWKVVYGGYDTKTQPAMPANMELTDGGQRIKLKMDNWIVK</sequence>
<keyword id="KW-0998">Cell outer membrane</keyword>
<keyword id="KW-0143">Chaperone</keyword>
<keyword id="KW-0449">Lipoprotein</keyword>
<keyword id="KW-0472">Membrane</keyword>
<keyword id="KW-0564">Palmitate</keyword>
<keyword id="KW-0653">Protein transport</keyword>
<keyword id="KW-0732">Signal</keyword>
<keyword id="KW-0813">Transport</keyword>
<comment type="function">
    <text evidence="1">Plays a critical role in the incorporation of lipoproteins in the outer membrane after they are released by the LolA protein.</text>
</comment>
<comment type="subunit">
    <text evidence="1">Monomer.</text>
</comment>
<comment type="subcellular location">
    <subcellularLocation>
        <location evidence="1">Cell outer membrane</location>
        <topology evidence="1">Lipid-anchor</topology>
    </subcellularLocation>
</comment>
<comment type="similarity">
    <text evidence="1">Belongs to the LolB family.</text>
</comment>
<reference key="1">
    <citation type="journal article" date="2008" name="J. Bacteriol.">
        <title>The pangenome structure of Escherichia coli: comparative genomic analysis of E. coli commensal and pathogenic isolates.</title>
        <authorList>
            <person name="Rasko D.A."/>
            <person name="Rosovitz M.J."/>
            <person name="Myers G.S.A."/>
            <person name="Mongodin E.F."/>
            <person name="Fricke W.F."/>
            <person name="Gajer P."/>
            <person name="Crabtree J."/>
            <person name="Sebaihia M."/>
            <person name="Thomson N.R."/>
            <person name="Chaudhuri R."/>
            <person name="Henderson I.R."/>
            <person name="Sperandio V."/>
            <person name="Ravel J."/>
        </authorList>
    </citation>
    <scope>NUCLEOTIDE SEQUENCE [LARGE SCALE GENOMIC DNA]</scope>
    <source>
        <strain>HS</strain>
    </source>
</reference>
<gene>
    <name evidence="1" type="primary">lolB</name>
    <name type="ordered locus">EcHS_A1314</name>
</gene>
<feature type="signal peptide" evidence="1">
    <location>
        <begin position="1"/>
        <end position="21"/>
    </location>
</feature>
<feature type="chain" id="PRO_1000058773" description="Outer-membrane lipoprotein LolB">
    <location>
        <begin position="22"/>
        <end position="207"/>
    </location>
</feature>
<feature type="lipid moiety-binding region" description="N-palmitoyl cysteine" evidence="1">
    <location>
        <position position="22"/>
    </location>
</feature>
<feature type="lipid moiety-binding region" description="S-diacylglycerol cysteine" evidence="1">
    <location>
        <position position="22"/>
    </location>
</feature>
<accession>A7ZZE5</accession>
<proteinExistence type="inferred from homology"/>